<feature type="chain" id="PRO_0000069428" description="Sphingosine 1-phosphate receptor 2">
    <location>
        <begin position="1"/>
        <end position="352"/>
    </location>
</feature>
<feature type="topological domain" description="Extracellular" evidence="1">
    <location>
        <begin position="1"/>
        <end position="34"/>
    </location>
</feature>
<feature type="transmembrane region" description="Helical; Name=1" evidence="1">
    <location>
        <begin position="35"/>
        <end position="59"/>
    </location>
</feature>
<feature type="topological domain" description="Cytoplasmic" evidence="1">
    <location>
        <begin position="60"/>
        <end position="66"/>
    </location>
</feature>
<feature type="transmembrane region" description="Helical; Name=2" evidence="1">
    <location>
        <begin position="67"/>
        <end position="95"/>
    </location>
</feature>
<feature type="topological domain" description="Extracellular" evidence="1">
    <location>
        <begin position="96"/>
        <end position="109"/>
    </location>
</feature>
<feature type="transmembrane region" description="Helical; Name=3" evidence="1">
    <location>
        <begin position="110"/>
        <end position="128"/>
    </location>
</feature>
<feature type="topological domain" description="Cytoplasmic" evidence="1">
    <location>
        <begin position="129"/>
        <end position="147"/>
    </location>
</feature>
<feature type="transmembrane region" description="Helical; Name=4" evidence="1">
    <location>
        <begin position="148"/>
        <end position="173"/>
    </location>
</feature>
<feature type="topological domain" description="Extracellular" evidence="1">
    <location>
        <begin position="174"/>
        <end position="189"/>
    </location>
</feature>
<feature type="transmembrane region" description="Helical; Name=5" evidence="1">
    <location>
        <begin position="190"/>
        <end position="210"/>
    </location>
</feature>
<feature type="topological domain" description="Cytoplasmic" evidence="1">
    <location>
        <begin position="211"/>
        <end position="233"/>
    </location>
</feature>
<feature type="transmembrane region" description="Helical; Name=6" evidence="1">
    <location>
        <begin position="234"/>
        <end position="255"/>
    </location>
</feature>
<feature type="topological domain" description="Extracellular" evidence="1">
    <location>
        <begin position="256"/>
        <end position="271"/>
    </location>
</feature>
<feature type="transmembrane region" description="Helical; Name=7" evidence="1">
    <location>
        <begin position="272"/>
        <end position="292"/>
    </location>
</feature>
<feature type="topological domain" description="Cytoplasmic" evidence="1">
    <location>
        <begin position="293"/>
        <end position="352"/>
    </location>
</feature>
<feature type="region of interest" description="Disordered" evidence="6">
    <location>
        <begin position="333"/>
        <end position="352"/>
    </location>
</feature>
<feature type="lipid moiety-binding region" description="S-palmitoyl cysteine" evidence="1">
    <location>
        <position position="305"/>
    </location>
</feature>
<feature type="glycosylation site" description="N-linked (GlcNAc...) asparagine" evidence="7 8">
    <location>
        <position position="19"/>
    </location>
</feature>
<feature type="sequence conflict" description="In Ref. 1; AAD16976 and 5; AAA16846." evidence="10" ref="1 5">
    <original>G</original>
    <variation>V</variation>
    <location>
        <position position="110"/>
    </location>
</feature>
<feature type="sequence conflict" description="In Ref. 5; AAA16846." evidence="10" ref="5">
    <original>P</original>
    <variation>S</variation>
    <location>
        <position position="166"/>
    </location>
</feature>
<feature type="sequence conflict" description="In Ref. 5; AAA16846." evidence="10" ref="5">
    <original>Q</original>
    <variation>K</variation>
    <location>
        <position position="175"/>
    </location>
</feature>
<feature type="sequence conflict" description="In Ref. 5; AAA16846." evidence="10" ref="5">
    <original>H</original>
    <variation>R</variation>
    <location>
        <position position="189"/>
    </location>
</feature>
<proteinExistence type="evidence at protein level"/>
<comment type="function">
    <text evidence="2 3">Receptor for the lysosphingolipid sphingosine 1-phosphate (S1P) (By similarity). S1P is a bioactive lysophospholipid that elicits diverse physiological effects on most types of cells and tissues (By similarity). Receptor for the chemokine-like protein FAM19A5 (By similarity). Mediates the inhibitory effect of FAM19A5 on vascular smooth muscle cell proliferation and migration (By similarity). In lymphoid follicles, couples the binding of S1P to the activation of GNA13 and downstream inhibition of AKT activation leading to suppression of germinal center (GC) B cell growth and migration outside the GC niche.</text>
</comment>
<comment type="interaction">
    <interactant intactId="EBI-16091339">
        <id>P52592</id>
    </interactant>
    <interactant intactId="EBI-3869532">
        <id>Q99P72</id>
        <label>Rtn4</label>
    </interactant>
    <organismsDiffer>false</organismsDiffer>
    <experiments>2</experiments>
</comment>
<comment type="interaction">
    <interactant intactId="EBI-16091339">
        <id>P52592</id>
    </interactant>
    <interactant intactId="EBI-919989">
        <id>Q9JK11-1</id>
        <label>Rtn4</label>
    </interactant>
    <organismsDiffer>true</organismsDiffer>
    <experiments>3</experiments>
</comment>
<comment type="subcellular location">
    <subcellularLocation>
        <location evidence="2">Cell membrane</location>
        <topology evidence="4">Multi-pass membrane protein</topology>
    </subcellularLocation>
</comment>
<comment type="tissue specificity">
    <text evidence="9">Most abundant in heart and lung; low, but clearly observed in kidney, liver and thymus; much lower but detectable in brain, testis, stomach and intestine. Not significantly detected in any of the sections of embryonic day (E) 14-18, except in embryonic brain.</text>
</comment>
<comment type="similarity">
    <text evidence="5">Belongs to the G-protein coupled receptor 1 family.</text>
</comment>
<name>S1PR2_MOUSE</name>
<reference key="1">
    <citation type="journal article" date="1999" name="Gene">
        <title>Comparative analysis of three murine G-protein coupled receptors activated by sphingosine-1-phosphate.</title>
        <authorList>
            <person name="Zhang G."/>
            <person name="Contos J.J.A."/>
            <person name="Weiner J.A."/>
            <person name="Fukushima N."/>
            <person name="Chun J."/>
        </authorList>
    </citation>
    <scope>NUCLEOTIDE SEQUENCE [GENOMIC DNA]</scope>
    <scope>TISSUE SPECIFICITY</scope>
    <source>
        <strain>129/SvJ</strain>
    </source>
</reference>
<reference key="2">
    <citation type="journal article" date="2005" name="Science">
        <title>The transcriptional landscape of the mammalian genome.</title>
        <authorList>
            <person name="Carninci P."/>
            <person name="Kasukawa T."/>
            <person name="Katayama S."/>
            <person name="Gough J."/>
            <person name="Frith M.C."/>
            <person name="Maeda N."/>
            <person name="Oyama R."/>
            <person name="Ravasi T."/>
            <person name="Lenhard B."/>
            <person name="Wells C."/>
            <person name="Kodzius R."/>
            <person name="Shimokawa K."/>
            <person name="Bajic V.B."/>
            <person name="Brenner S.E."/>
            <person name="Batalov S."/>
            <person name="Forrest A.R."/>
            <person name="Zavolan M."/>
            <person name="Davis M.J."/>
            <person name="Wilming L.G."/>
            <person name="Aidinis V."/>
            <person name="Allen J.E."/>
            <person name="Ambesi-Impiombato A."/>
            <person name="Apweiler R."/>
            <person name="Aturaliya R.N."/>
            <person name="Bailey T.L."/>
            <person name="Bansal M."/>
            <person name="Baxter L."/>
            <person name="Beisel K.W."/>
            <person name="Bersano T."/>
            <person name="Bono H."/>
            <person name="Chalk A.M."/>
            <person name="Chiu K.P."/>
            <person name="Choudhary V."/>
            <person name="Christoffels A."/>
            <person name="Clutterbuck D.R."/>
            <person name="Crowe M.L."/>
            <person name="Dalla E."/>
            <person name="Dalrymple B.P."/>
            <person name="de Bono B."/>
            <person name="Della Gatta G."/>
            <person name="di Bernardo D."/>
            <person name="Down T."/>
            <person name="Engstrom P."/>
            <person name="Fagiolini M."/>
            <person name="Faulkner G."/>
            <person name="Fletcher C.F."/>
            <person name="Fukushima T."/>
            <person name="Furuno M."/>
            <person name="Futaki S."/>
            <person name="Gariboldi M."/>
            <person name="Georgii-Hemming P."/>
            <person name="Gingeras T.R."/>
            <person name="Gojobori T."/>
            <person name="Green R.E."/>
            <person name="Gustincich S."/>
            <person name="Harbers M."/>
            <person name="Hayashi Y."/>
            <person name="Hensch T.K."/>
            <person name="Hirokawa N."/>
            <person name="Hill D."/>
            <person name="Huminiecki L."/>
            <person name="Iacono M."/>
            <person name="Ikeo K."/>
            <person name="Iwama A."/>
            <person name="Ishikawa T."/>
            <person name="Jakt M."/>
            <person name="Kanapin A."/>
            <person name="Katoh M."/>
            <person name="Kawasawa Y."/>
            <person name="Kelso J."/>
            <person name="Kitamura H."/>
            <person name="Kitano H."/>
            <person name="Kollias G."/>
            <person name="Krishnan S.P."/>
            <person name="Kruger A."/>
            <person name="Kummerfeld S.K."/>
            <person name="Kurochkin I.V."/>
            <person name="Lareau L.F."/>
            <person name="Lazarevic D."/>
            <person name="Lipovich L."/>
            <person name="Liu J."/>
            <person name="Liuni S."/>
            <person name="McWilliam S."/>
            <person name="Madan Babu M."/>
            <person name="Madera M."/>
            <person name="Marchionni L."/>
            <person name="Matsuda H."/>
            <person name="Matsuzawa S."/>
            <person name="Miki H."/>
            <person name="Mignone F."/>
            <person name="Miyake S."/>
            <person name="Morris K."/>
            <person name="Mottagui-Tabar S."/>
            <person name="Mulder N."/>
            <person name="Nakano N."/>
            <person name="Nakauchi H."/>
            <person name="Ng P."/>
            <person name="Nilsson R."/>
            <person name="Nishiguchi S."/>
            <person name="Nishikawa S."/>
            <person name="Nori F."/>
            <person name="Ohara O."/>
            <person name="Okazaki Y."/>
            <person name="Orlando V."/>
            <person name="Pang K.C."/>
            <person name="Pavan W.J."/>
            <person name="Pavesi G."/>
            <person name="Pesole G."/>
            <person name="Petrovsky N."/>
            <person name="Piazza S."/>
            <person name="Reed J."/>
            <person name="Reid J.F."/>
            <person name="Ring B.Z."/>
            <person name="Ringwald M."/>
            <person name="Rost B."/>
            <person name="Ruan Y."/>
            <person name="Salzberg S.L."/>
            <person name="Sandelin A."/>
            <person name="Schneider C."/>
            <person name="Schoenbach C."/>
            <person name="Sekiguchi K."/>
            <person name="Semple C.A."/>
            <person name="Seno S."/>
            <person name="Sessa L."/>
            <person name="Sheng Y."/>
            <person name="Shibata Y."/>
            <person name="Shimada H."/>
            <person name="Shimada K."/>
            <person name="Silva D."/>
            <person name="Sinclair B."/>
            <person name="Sperling S."/>
            <person name="Stupka E."/>
            <person name="Sugiura K."/>
            <person name="Sultana R."/>
            <person name="Takenaka Y."/>
            <person name="Taki K."/>
            <person name="Tammoja K."/>
            <person name="Tan S.L."/>
            <person name="Tang S."/>
            <person name="Taylor M.S."/>
            <person name="Tegner J."/>
            <person name="Teichmann S.A."/>
            <person name="Ueda H.R."/>
            <person name="van Nimwegen E."/>
            <person name="Verardo R."/>
            <person name="Wei C.L."/>
            <person name="Yagi K."/>
            <person name="Yamanishi H."/>
            <person name="Zabarovsky E."/>
            <person name="Zhu S."/>
            <person name="Zimmer A."/>
            <person name="Hide W."/>
            <person name="Bult C."/>
            <person name="Grimmond S.M."/>
            <person name="Teasdale R.D."/>
            <person name="Liu E.T."/>
            <person name="Brusic V."/>
            <person name="Quackenbush J."/>
            <person name="Wahlestedt C."/>
            <person name="Mattick J.S."/>
            <person name="Hume D.A."/>
            <person name="Kai C."/>
            <person name="Sasaki D."/>
            <person name="Tomaru Y."/>
            <person name="Fukuda S."/>
            <person name="Kanamori-Katayama M."/>
            <person name="Suzuki M."/>
            <person name="Aoki J."/>
            <person name="Arakawa T."/>
            <person name="Iida J."/>
            <person name="Imamura K."/>
            <person name="Itoh M."/>
            <person name="Kato T."/>
            <person name="Kawaji H."/>
            <person name="Kawagashira N."/>
            <person name="Kawashima T."/>
            <person name="Kojima M."/>
            <person name="Kondo S."/>
            <person name="Konno H."/>
            <person name="Nakano K."/>
            <person name="Ninomiya N."/>
            <person name="Nishio T."/>
            <person name="Okada M."/>
            <person name="Plessy C."/>
            <person name="Shibata K."/>
            <person name="Shiraki T."/>
            <person name="Suzuki S."/>
            <person name="Tagami M."/>
            <person name="Waki K."/>
            <person name="Watahiki A."/>
            <person name="Okamura-Oho Y."/>
            <person name="Suzuki H."/>
            <person name="Kawai J."/>
            <person name="Hayashizaki Y."/>
        </authorList>
    </citation>
    <scope>NUCLEOTIDE SEQUENCE [LARGE SCALE MRNA]</scope>
    <source>
        <strain>C57BL/6J</strain>
        <strain>NOD</strain>
        <tissue>Bone marrow</tissue>
        <tissue>Forelimb</tissue>
        <tissue>Lung</tissue>
    </source>
</reference>
<reference key="3">
    <citation type="submission" date="2005-07" db="EMBL/GenBank/DDBJ databases">
        <authorList>
            <person name="Mural R.J."/>
            <person name="Adams M.D."/>
            <person name="Myers E.W."/>
            <person name="Smith H.O."/>
            <person name="Venter J.C."/>
        </authorList>
    </citation>
    <scope>NUCLEOTIDE SEQUENCE [LARGE SCALE GENOMIC DNA]</scope>
</reference>
<reference key="4">
    <citation type="journal article" date="2004" name="Genome Res.">
        <title>The status, quality, and expansion of the NIH full-length cDNA project: the Mammalian Gene Collection (MGC).</title>
        <authorList>
            <consortium name="The MGC Project Team"/>
        </authorList>
    </citation>
    <scope>NUCLEOTIDE SEQUENCE [LARGE SCALE MRNA]</scope>
</reference>
<reference key="5">
    <citation type="journal article" date="1993" name="Genomics">
        <title>Identification, chromosomal location, and genome organization of mammalian G-protein-coupled receptors.</title>
        <authorList>
            <person name="Wilkie T.M."/>
            <person name="Chen Y."/>
            <person name="Gilbert D.J."/>
            <person name="Moore K.J."/>
            <person name="Yu L."/>
            <person name="Simon M.I."/>
            <person name="Copeland N.G."/>
            <person name="Jenkins N.A."/>
        </authorList>
    </citation>
    <scope>NUCLEOTIDE SEQUENCE [MRNA] OF 62-241</scope>
    <source>
        <tissue>Testis</tissue>
    </source>
</reference>
<reference key="6">
    <citation type="journal article" date="2009" name="Immunity">
        <title>The phagosomal proteome in interferon-gamma-activated macrophages.</title>
        <authorList>
            <person name="Trost M."/>
            <person name="English L."/>
            <person name="Lemieux S."/>
            <person name="Courcelles M."/>
            <person name="Desjardins M."/>
            <person name="Thibault P."/>
        </authorList>
    </citation>
    <scope>IDENTIFICATION BY MASS SPECTROMETRY [LARGE SCALE ANALYSIS]</scope>
</reference>
<reference key="7">
    <citation type="journal article" date="2009" name="Mol. Cell. Proteomics">
        <title>The mouse C2C12 myoblast cell surface N-linked glycoproteome: identification, glycosite occupancy, and membrane orientation.</title>
        <authorList>
            <person name="Gundry R.L."/>
            <person name="Raginski K."/>
            <person name="Tarasova Y."/>
            <person name="Tchernyshyov I."/>
            <person name="Bausch-Fluck D."/>
            <person name="Elliott S.T."/>
            <person name="Boheler K.R."/>
            <person name="Van Eyk J.E."/>
            <person name="Wollscheid B."/>
        </authorList>
    </citation>
    <scope>GLYCOSYLATION [LARGE SCALE ANALYSIS] AT ASN-19</scope>
    <source>
        <tissue>Myoblast</tissue>
    </source>
</reference>
<reference key="8">
    <citation type="journal article" date="2009" name="Nat. Biotechnol.">
        <title>Mass-spectrometric identification and relative quantification of N-linked cell surface glycoproteins.</title>
        <authorList>
            <person name="Wollscheid B."/>
            <person name="Bausch-Fluck D."/>
            <person name="Henderson C."/>
            <person name="O'Brien R."/>
            <person name="Bibel M."/>
            <person name="Schiess R."/>
            <person name="Aebersold R."/>
            <person name="Watts J.D."/>
        </authorList>
    </citation>
    <scope>GLYCOSYLATION [LARGE SCALE ANALYSIS] AT ASN-19</scope>
</reference>
<accession>P52592</accession>
<accession>Q8C3Q7</accession>
<accession>Q9R236</accession>
<evidence type="ECO:0000250" key="1"/>
<evidence type="ECO:0000250" key="2">
    <source>
        <dbReference type="UniProtKB" id="O95136"/>
    </source>
</evidence>
<evidence type="ECO:0000250" key="3">
    <source>
        <dbReference type="UniProtKB" id="P47752"/>
    </source>
</evidence>
<evidence type="ECO:0000255" key="4"/>
<evidence type="ECO:0000255" key="5">
    <source>
        <dbReference type="PROSITE-ProRule" id="PRU00521"/>
    </source>
</evidence>
<evidence type="ECO:0000256" key="6">
    <source>
        <dbReference type="SAM" id="MobiDB-lite"/>
    </source>
</evidence>
<evidence type="ECO:0000269" key="7">
    <source>
    </source>
</evidence>
<evidence type="ECO:0000269" key="8">
    <source>
    </source>
</evidence>
<evidence type="ECO:0000269" key="9">
    <source>
    </source>
</evidence>
<evidence type="ECO:0000305" key="10"/>
<dbReference type="EMBL" id="AF108020">
    <property type="protein sequence ID" value="AAD16976.1"/>
    <property type="molecule type" value="Genomic_DNA"/>
</dbReference>
<dbReference type="EMBL" id="AK085114">
    <property type="protein sequence ID" value="BAC39368.1"/>
    <property type="molecule type" value="mRNA"/>
</dbReference>
<dbReference type="EMBL" id="AK134275">
    <property type="protein sequence ID" value="BAE22078.1"/>
    <property type="molecule type" value="mRNA"/>
</dbReference>
<dbReference type="EMBL" id="AK151062">
    <property type="protein sequence ID" value="BAE30079.1"/>
    <property type="molecule type" value="mRNA"/>
</dbReference>
<dbReference type="EMBL" id="AK159605">
    <property type="protein sequence ID" value="BAE35224.1"/>
    <property type="molecule type" value="mRNA"/>
</dbReference>
<dbReference type="EMBL" id="AK170436">
    <property type="protein sequence ID" value="BAE41795.1"/>
    <property type="molecule type" value="mRNA"/>
</dbReference>
<dbReference type="EMBL" id="CH466522">
    <property type="protein sequence ID" value="EDL25146.1"/>
    <property type="molecule type" value="Genomic_DNA"/>
</dbReference>
<dbReference type="EMBL" id="BC096760">
    <property type="protein sequence ID" value="AAH96760.1"/>
    <property type="molecule type" value="mRNA"/>
</dbReference>
<dbReference type="EMBL" id="L20334">
    <property type="protein sequence ID" value="AAA16846.1"/>
    <property type="molecule type" value="mRNA"/>
</dbReference>
<dbReference type="CCDS" id="CCDS22888.1"/>
<dbReference type="PIR" id="E48909">
    <property type="entry name" value="E48909"/>
</dbReference>
<dbReference type="RefSeq" id="NP_034463.2">
    <property type="nucleotide sequence ID" value="NM_010333.4"/>
</dbReference>
<dbReference type="RefSeq" id="XP_006510082.1">
    <property type="nucleotide sequence ID" value="XM_006510019.5"/>
</dbReference>
<dbReference type="SMR" id="P52592"/>
<dbReference type="DIP" id="DIP-60681N"/>
<dbReference type="FunCoup" id="P52592">
    <property type="interactions" value="1455"/>
</dbReference>
<dbReference type="IntAct" id="P52592">
    <property type="interactions" value="3"/>
</dbReference>
<dbReference type="STRING" id="10090.ENSMUSP00000053394"/>
<dbReference type="GuidetoPHARMACOLOGY" id="276"/>
<dbReference type="GlyCosmos" id="P52592">
    <property type="glycosylation" value="1 site, No reported glycans"/>
</dbReference>
<dbReference type="GlyGen" id="P52592">
    <property type="glycosylation" value="2 sites, 1 O-linked glycan (1 site)"/>
</dbReference>
<dbReference type="iPTMnet" id="P52592"/>
<dbReference type="PhosphoSitePlus" id="P52592"/>
<dbReference type="SwissPalm" id="P52592"/>
<dbReference type="PaxDb" id="10090-ENSMUSP00000053394"/>
<dbReference type="PeptideAtlas" id="P52592"/>
<dbReference type="ProteomicsDB" id="260751"/>
<dbReference type="Pumba" id="P52592"/>
<dbReference type="Antibodypedia" id="65016">
    <property type="antibodies" value="328 antibodies from 34 providers"/>
</dbReference>
<dbReference type="DNASU" id="14739"/>
<dbReference type="Ensembl" id="ENSMUST00000054197.7">
    <property type="protein sequence ID" value="ENSMUSP00000053394.6"/>
    <property type="gene ID" value="ENSMUSG00000043895.7"/>
</dbReference>
<dbReference type="GeneID" id="14739"/>
<dbReference type="KEGG" id="mmu:14739"/>
<dbReference type="UCSC" id="uc009ojt.2">
    <property type="organism name" value="mouse"/>
</dbReference>
<dbReference type="AGR" id="MGI:99569"/>
<dbReference type="CTD" id="9294"/>
<dbReference type="MGI" id="MGI:99569">
    <property type="gene designation" value="S1pr2"/>
</dbReference>
<dbReference type="VEuPathDB" id="HostDB:ENSMUSG00000043895"/>
<dbReference type="eggNOG" id="ENOG502QVQY">
    <property type="taxonomic scope" value="Eukaryota"/>
</dbReference>
<dbReference type="GeneTree" id="ENSGT01050000244887"/>
<dbReference type="HOGENOM" id="CLU_047979_1_0_1"/>
<dbReference type="InParanoid" id="P52592"/>
<dbReference type="OMA" id="ACWVTSI"/>
<dbReference type="OrthoDB" id="10051098at2759"/>
<dbReference type="PhylomeDB" id="P52592"/>
<dbReference type="TreeFam" id="TF330052"/>
<dbReference type="Reactome" id="R-MMU-418594">
    <property type="pathway name" value="G alpha (i) signalling events"/>
</dbReference>
<dbReference type="Reactome" id="R-MMU-419408">
    <property type="pathway name" value="Lysosphingolipid and LPA receptors"/>
</dbReference>
<dbReference type="BioGRID-ORCS" id="14739">
    <property type="hits" value="3 hits in 77 CRISPR screens"/>
</dbReference>
<dbReference type="ChiTaRS" id="S1pr2">
    <property type="organism name" value="mouse"/>
</dbReference>
<dbReference type="PRO" id="PR:P52592"/>
<dbReference type="Proteomes" id="UP000000589">
    <property type="component" value="Chromosome 9"/>
</dbReference>
<dbReference type="RNAct" id="P52592">
    <property type="molecule type" value="protein"/>
</dbReference>
<dbReference type="Bgee" id="ENSMUSG00000043895">
    <property type="expression patterns" value="Expressed in decidua and 190 other cell types or tissues"/>
</dbReference>
<dbReference type="ExpressionAtlas" id="P52592">
    <property type="expression patterns" value="baseline and differential"/>
</dbReference>
<dbReference type="GO" id="GO:0098978">
    <property type="term" value="C:glutamatergic synapse"/>
    <property type="evidence" value="ECO:0000314"/>
    <property type="project" value="SynGO"/>
</dbReference>
<dbReference type="GO" id="GO:0005886">
    <property type="term" value="C:plasma membrane"/>
    <property type="evidence" value="ECO:0000266"/>
    <property type="project" value="MGI"/>
</dbReference>
<dbReference type="GO" id="GO:0098794">
    <property type="term" value="C:postsynapse"/>
    <property type="evidence" value="ECO:0007669"/>
    <property type="project" value="GOC"/>
</dbReference>
<dbReference type="GO" id="GO:0098793">
    <property type="term" value="C:presynapse"/>
    <property type="evidence" value="ECO:0000314"/>
    <property type="project" value="SynGO"/>
</dbReference>
<dbReference type="GO" id="GO:0008528">
    <property type="term" value="F:G protein-coupled peptide receptor activity"/>
    <property type="evidence" value="ECO:0000266"/>
    <property type="project" value="MGI"/>
</dbReference>
<dbReference type="GO" id="GO:0001664">
    <property type="term" value="F:G protein-coupled receptor binding"/>
    <property type="evidence" value="ECO:0007669"/>
    <property type="project" value="Ensembl"/>
</dbReference>
<dbReference type="GO" id="GO:0005178">
    <property type="term" value="F:integrin binding"/>
    <property type="evidence" value="ECO:0007669"/>
    <property type="project" value="Ensembl"/>
</dbReference>
<dbReference type="GO" id="GO:0038036">
    <property type="term" value="F:sphingosine-1-phosphate receptor activity"/>
    <property type="evidence" value="ECO:0000266"/>
    <property type="project" value="MGI"/>
</dbReference>
<dbReference type="GO" id="GO:0030036">
    <property type="term" value="P:actin cytoskeleton organization"/>
    <property type="evidence" value="ECO:0007669"/>
    <property type="project" value="Ensembl"/>
</dbReference>
<dbReference type="GO" id="GO:0060079">
    <property type="term" value="P:excitatory postsynaptic potential"/>
    <property type="evidence" value="ECO:0000315"/>
    <property type="project" value="MGI"/>
</dbReference>
<dbReference type="GO" id="GO:0046847">
    <property type="term" value="P:filopodium assembly"/>
    <property type="evidence" value="ECO:0007669"/>
    <property type="project" value="Ensembl"/>
</dbReference>
<dbReference type="GO" id="GO:0007186">
    <property type="term" value="P:G protein-coupled receptor signaling pathway"/>
    <property type="evidence" value="ECO:0000266"/>
    <property type="project" value="MGI"/>
</dbReference>
<dbReference type="GO" id="GO:0090394">
    <property type="term" value="P:negative regulation of excitatory postsynaptic potential"/>
    <property type="evidence" value="ECO:0000315"/>
    <property type="project" value="MGI"/>
</dbReference>
<dbReference type="GO" id="GO:0014912">
    <property type="term" value="P:negative regulation of smooth muscle cell migration"/>
    <property type="evidence" value="ECO:0000266"/>
    <property type="project" value="MGI"/>
</dbReference>
<dbReference type="GO" id="GO:1904706">
    <property type="term" value="P:negative regulation of vascular associated smooth muscle cell proliferation"/>
    <property type="evidence" value="ECO:0000266"/>
    <property type="project" value="MGI"/>
</dbReference>
<dbReference type="GO" id="GO:1903142">
    <property type="term" value="P:positive regulation of establishment of endothelial barrier"/>
    <property type="evidence" value="ECO:0007669"/>
    <property type="project" value="Ensembl"/>
</dbReference>
<dbReference type="GO" id="GO:0010800">
    <property type="term" value="P:positive regulation of peptidyl-threonine phosphorylation"/>
    <property type="evidence" value="ECO:0000315"/>
    <property type="project" value="UniProtKB"/>
</dbReference>
<dbReference type="GO" id="GO:0150052">
    <property type="term" value="P:regulation of postsynapse assembly"/>
    <property type="evidence" value="ECO:0000314"/>
    <property type="project" value="SynGO"/>
</dbReference>
<dbReference type="GO" id="GO:0003376">
    <property type="term" value="P:sphingosine-1-phosphate receptor signaling pathway"/>
    <property type="evidence" value="ECO:0000315"/>
    <property type="project" value="UniProtKB"/>
</dbReference>
<dbReference type="FunFam" id="1.20.1070.10:FF:000098">
    <property type="entry name" value="Sphingosine 1-phosphate receptor 1"/>
    <property type="match status" value="1"/>
</dbReference>
<dbReference type="Gene3D" id="1.20.1070.10">
    <property type="entry name" value="Rhodopsin 7-helix transmembrane proteins"/>
    <property type="match status" value="1"/>
</dbReference>
<dbReference type="InterPro" id="IPR004063">
    <property type="entry name" value="EDG5_rcpt"/>
</dbReference>
<dbReference type="InterPro" id="IPR000276">
    <property type="entry name" value="GPCR_Rhodpsn"/>
</dbReference>
<dbReference type="InterPro" id="IPR017452">
    <property type="entry name" value="GPCR_Rhodpsn_7TM"/>
</dbReference>
<dbReference type="InterPro" id="IPR004061">
    <property type="entry name" value="S1P_rcpt"/>
</dbReference>
<dbReference type="PANTHER" id="PTHR22750">
    <property type="entry name" value="G-PROTEIN COUPLED RECEPTOR"/>
    <property type="match status" value="1"/>
</dbReference>
<dbReference type="Pfam" id="PF00001">
    <property type="entry name" value="7tm_1"/>
    <property type="match status" value="1"/>
</dbReference>
<dbReference type="PRINTS" id="PR01525">
    <property type="entry name" value="EDG5RECEPTOR"/>
</dbReference>
<dbReference type="PRINTS" id="PR00237">
    <property type="entry name" value="GPCRRHODOPSN"/>
</dbReference>
<dbReference type="PRINTS" id="PR01523">
    <property type="entry name" value="S1PRECEPTOR"/>
</dbReference>
<dbReference type="SUPFAM" id="SSF81321">
    <property type="entry name" value="Family A G protein-coupled receptor-like"/>
    <property type="match status" value="1"/>
</dbReference>
<dbReference type="PROSITE" id="PS50262">
    <property type="entry name" value="G_PROTEIN_RECEP_F1_2"/>
    <property type="match status" value="1"/>
</dbReference>
<gene>
    <name type="primary">S1pr2</name>
    <name type="synonym">Edg5</name>
    <name type="synonym">Gpcr13</name>
    <name type="synonym">Lpb2</name>
</gene>
<keyword id="KW-1003">Cell membrane</keyword>
<keyword id="KW-0297">G-protein coupled receptor</keyword>
<keyword id="KW-0325">Glycoprotein</keyword>
<keyword id="KW-0449">Lipoprotein</keyword>
<keyword id="KW-0472">Membrane</keyword>
<keyword id="KW-0564">Palmitate</keyword>
<keyword id="KW-0675">Receptor</keyword>
<keyword id="KW-1185">Reference proteome</keyword>
<keyword id="KW-0807">Transducer</keyword>
<keyword id="KW-0812">Transmembrane</keyword>
<keyword id="KW-1133">Transmembrane helix</keyword>
<sequence>MGGLYSEYLNPEKVLEHYNYTKETLDMQETTSRKVASAFIIILCCAIVVENLLVLIAVARNSKFHSAMYLFLGNLAASDLLAGVAFVANTLLSGHVTLSLTPVQWFAREGSAFITLSASVFSLLAIAIERQVALAKVKLYGSDKSCRMLMLIGASWLISLILGGLPILGWNCLNQLEACSTVLPLYAKHYVLCVVTIFSVILLAIVALYVRIYFVVRSSHADVAGPQTLALLKTVTIVLGVFIICWLPAFSILLLDSTCPVRACPVLYKAHYFFAFATLNSLLNPVIYTWRSRDLRREVLRPLQCWRRGKGVTGRRGGNPGHRLLPLRSSSSLERGMHMPTSPTFLEGNTVV</sequence>
<organism>
    <name type="scientific">Mus musculus</name>
    <name type="common">Mouse</name>
    <dbReference type="NCBI Taxonomy" id="10090"/>
    <lineage>
        <taxon>Eukaryota</taxon>
        <taxon>Metazoa</taxon>
        <taxon>Chordata</taxon>
        <taxon>Craniata</taxon>
        <taxon>Vertebrata</taxon>
        <taxon>Euteleostomi</taxon>
        <taxon>Mammalia</taxon>
        <taxon>Eutheria</taxon>
        <taxon>Euarchontoglires</taxon>
        <taxon>Glires</taxon>
        <taxon>Rodentia</taxon>
        <taxon>Myomorpha</taxon>
        <taxon>Muroidea</taxon>
        <taxon>Muridae</taxon>
        <taxon>Murinae</taxon>
        <taxon>Mus</taxon>
        <taxon>Mus</taxon>
    </lineage>
</organism>
<protein>
    <recommendedName>
        <fullName>Sphingosine 1-phosphate receptor 2</fullName>
        <shortName>S1P receptor 2</shortName>
        <shortName>S1P2</shortName>
    </recommendedName>
    <alternativeName>
        <fullName>Endothelial differentiation G-protein coupled receptor 5</fullName>
    </alternativeName>
    <alternativeName>
        <fullName>Lysophospholipid receptor B2</fullName>
    </alternativeName>
    <alternativeName>
        <fullName>Sphingosine 1-phosphate receptor Edg-5</fullName>
        <shortName>S1P receptor Edg-5</shortName>
    </alternativeName>
</protein>